<gene>
    <name type="ordered locus">STER_0421</name>
</gene>
<name>NTDP_STRTD</name>
<dbReference type="EC" id="3.6.1.15" evidence="1"/>
<dbReference type="EC" id="3.6.1.6" evidence="1"/>
<dbReference type="EMBL" id="CP000419">
    <property type="protein sequence ID" value="ABJ65709.1"/>
    <property type="molecule type" value="Genomic_DNA"/>
</dbReference>
<dbReference type="RefSeq" id="WP_011680775.1">
    <property type="nucleotide sequence ID" value="NC_008532.1"/>
</dbReference>
<dbReference type="SMR" id="Q03M63"/>
<dbReference type="KEGG" id="ste:STER_0421"/>
<dbReference type="HOGENOM" id="CLU_109787_1_0_9"/>
<dbReference type="GO" id="GO:0000287">
    <property type="term" value="F:magnesium ion binding"/>
    <property type="evidence" value="ECO:0007669"/>
    <property type="project" value="UniProtKB-UniRule"/>
</dbReference>
<dbReference type="GO" id="GO:0017110">
    <property type="term" value="F:nucleoside diphosphate phosphatase activity"/>
    <property type="evidence" value="ECO:0007669"/>
    <property type="project" value="UniProtKB-UniRule"/>
</dbReference>
<dbReference type="GO" id="GO:0017111">
    <property type="term" value="F:ribonucleoside triphosphate phosphatase activity"/>
    <property type="evidence" value="ECO:0007669"/>
    <property type="project" value="UniProtKB-UniRule"/>
</dbReference>
<dbReference type="Gene3D" id="2.40.380.10">
    <property type="entry name" value="FomD-like"/>
    <property type="match status" value="1"/>
</dbReference>
<dbReference type="HAMAP" id="MF_01568">
    <property type="entry name" value="Ntdp"/>
    <property type="match status" value="1"/>
</dbReference>
<dbReference type="InterPro" id="IPR007295">
    <property type="entry name" value="DUF402"/>
</dbReference>
<dbReference type="InterPro" id="IPR035930">
    <property type="entry name" value="FomD-like_sf"/>
</dbReference>
<dbReference type="InterPro" id="IPR050212">
    <property type="entry name" value="Ntdp-like"/>
</dbReference>
<dbReference type="InterPro" id="IPR016882">
    <property type="entry name" value="SA1684"/>
</dbReference>
<dbReference type="NCBIfam" id="NF010183">
    <property type="entry name" value="PRK13662.1"/>
    <property type="match status" value="1"/>
</dbReference>
<dbReference type="PANTHER" id="PTHR39159">
    <property type="match status" value="1"/>
</dbReference>
<dbReference type="PANTHER" id="PTHR39159:SF1">
    <property type="entry name" value="UPF0374 PROTEIN YGAC"/>
    <property type="match status" value="1"/>
</dbReference>
<dbReference type="Pfam" id="PF04167">
    <property type="entry name" value="DUF402"/>
    <property type="match status" value="1"/>
</dbReference>
<dbReference type="PIRSF" id="PIRSF028345">
    <property type="entry name" value="UCP028345"/>
    <property type="match status" value="1"/>
</dbReference>
<dbReference type="SUPFAM" id="SSF159234">
    <property type="entry name" value="FomD-like"/>
    <property type="match status" value="1"/>
</dbReference>
<sequence length="177" mass="21157">MKLPKEGDFITIQSYKHDGRLHRTWRDTMVLKTTENAVIGVNDHTLVTEADGRRWVTREPAIVYFHKKYWFNIIAMIRDNGISYYCNLASPYVLDQEALKYIDYDLDVKVFADGEKKLLDVDEYEIHKKEMHYSPDIDYILKEHVKILVDWINNGKGPFSQSYVNIWYKRYLELRSR</sequence>
<proteinExistence type="inferred from homology"/>
<evidence type="ECO:0000255" key="1">
    <source>
        <dbReference type="HAMAP-Rule" id="MF_01568"/>
    </source>
</evidence>
<reference key="1">
    <citation type="journal article" date="2006" name="Proc. Natl. Acad. Sci. U.S.A.">
        <title>Comparative genomics of the lactic acid bacteria.</title>
        <authorList>
            <person name="Makarova K.S."/>
            <person name="Slesarev A."/>
            <person name="Wolf Y.I."/>
            <person name="Sorokin A."/>
            <person name="Mirkin B."/>
            <person name="Koonin E.V."/>
            <person name="Pavlov A."/>
            <person name="Pavlova N."/>
            <person name="Karamychev V."/>
            <person name="Polouchine N."/>
            <person name="Shakhova V."/>
            <person name="Grigoriev I."/>
            <person name="Lou Y."/>
            <person name="Rohksar D."/>
            <person name="Lucas S."/>
            <person name="Huang K."/>
            <person name="Goodstein D.M."/>
            <person name="Hawkins T."/>
            <person name="Plengvidhya V."/>
            <person name="Welker D."/>
            <person name="Hughes J."/>
            <person name="Goh Y."/>
            <person name="Benson A."/>
            <person name="Baldwin K."/>
            <person name="Lee J.-H."/>
            <person name="Diaz-Muniz I."/>
            <person name="Dosti B."/>
            <person name="Smeianov V."/>
            <person name="Wechter W."/>
            <person name="Barabote R."/>
            <person name="Lorca G."/>
            <person name="Altermann E."/>
            <person name="Barrangou R."/>
            <person name="Ganesan B."/>
            <person name="Xie Y."/>
            <person name="Rawsthorne H."/>
            <person name="Tamir D."/>
            <person name="Parker C."/>
            <person name="Breidt F."/>
            <person name="Broadbent J.R."/>
            <person name="Hutkins R."/>
            <person name="O'Sullivan D."/>
            <person name="Steele J."/>
            <person name="Unlu G."/>
            <person name="Saier M.H. Jr."/>
            <person name="Klaenhammer T."/>
            <person name="Richardson P."/>
            <person name="Kozyavkin S."/>
            <person name="Weimer B.C."/>
            <person name="Mills D.A."/>
        </authorList>
    </citation>
    <scope>NUCLEOTIDE SEQUENCE [LARGE SCALE GENOMIC DNA]</scope>
    <source>
        <strain>ATCC BAA-491 / LMD-9</strain>
    </source>
</reference>
<comment type="function">
    <text evidence="1">Has nucleoside phosphatase activity towards nucleoside triphosphates and nucleoside diphosphates.</text>
</comment>
<comment type="catalytic activity">
    <reaction evidence="1">
        <text>a ribonucleoside 5'-triphosphate + H2O = a ribonucleoside 5'-diphosphate + phosphate + H(+)</text>
        <dbReference type="Rhea" id="RHEA:23680"/>
        <dbReference type="ChEBI" id="CHEBI:15377"/>
        <dbReference type="ChEBI" id="CHEBI:15378"/>
        <dbReference type="ChEBI" id="CHEBI:43474"/>
        <dbReference type="ChEBI" id="CHEBI:57930"/>
        <dbReference type="ChEBI" id="CHEBI:61557"/>
        <dbReference type="EC" id="3.6.1.15"/>
    </reaction>
</comment>
<comment type="catalytic activity">
    <reaction evidence="1">
        <text>a ribonucleoside 5'-diphosphate + H2O = a ribonucleoside 5'-phosphate + phosphate + H(+)</text>
        <dbReference type="Rhea" id="RHEA:36799"/>
        <dbReference type="ChEBI" id="CHEBI:15377"/>
        <dbReference type="ChEBI" id="CHEBI:15378"/>
        <dbReference type="ChEBI" id="CHEBI:43474"/>
        <dbReference type="ChEBI" id="CHEBI:57930"/>
        <dbReference type="ChEBI" id="CHEBI:58043"/>
        <dbReference type="EC" id="3.6.1.6"/>
    </reaction>
</comment>
<comment type="cofactor">
    <cofactor evidence="1">
        <name>Mg(2+)</name>
        <dbReference type="ChEBI" id="CHEBI:18420"/>
    </cofactor>
</comment>
<comment type="similarity">
    <text evidence="1">Belongs to the Ntdp family.</text>
</comment>
<feature type="chain" id="PRO_1000069114" description="Nucleoside triphosphate/diphosphate phosphatase">
    <location>
        <begin position="1"/>
        <end position="177"/>
    </location>
</feature>
<feature type="active site" description="Proton donor" evidence="1">
    <location>
        <position position="23"/>
    </location>
</feature>
<feature type="binding site" evidence="1">
    <location>
        <position position="87"/>
    </location>
    <ligand>
        <name>Mg(2+)</name>
        <dbReference type="ChEBI" id="CHEBI:18420"/>
        <label>1</label>
    </ligand>
</feature>
<feature type="binding site" evidence="1">
    <location>
        <position position="103"/>
    </location>
    <ligand>
        <name>Mg(2+)</name>
        <dbReference type="ChEBI" id="CHEBI:18420"/>
        <label>1</label>
    </ligand>
</feature>
<feature type="binding site" evidence="1">
    <location>
        <position position="105"/>
    </location>
    <ligand>
        <name>Mg(2+)</name>
        <dbReference type="ChEBI" id="CHEBI:18420"/>
        <label>2</label>
    </ligand>
</feature>
<feature type="binding site" evidence="1">
    <location>
        <position position="107"/>
    </location>
    <ligand>
        <name>Mg(2+)</name>
        <dbReference type="ChEBI" id="CHEBI:18420"/>
        <label>1</label>
    </ligand>
</feature>
<feature type="binding site" evidence="1">
    <location>
        <position position="107"/>
    </location>
    <ligand>
        <name>Mg(2+)</name>
        <dbReference type="ChEBI" id="CHEBI:18420"/>
        <label>2</label>
    </ligand>
</feature>
<feature type="binding site" evidence="1">
    <location>
        <position position="120"/>
    </location>
    <ligand>
        <name>Mg(2+)</name>
        <dbReference type="ChEBI" id="CHEBI:18420"/>
        <label>2</label>
    </ligand>
</feature>
<feature type="binding site" evidence="1">
    <location>
        <position position="123"/>
    </location>
    <ligand>
        <name>Mg(2+)</name>
        <dbReference type="ChEBI" id="CHEBI:18420"/>
        <label>2</label>
    </ligand>
</feature>
<accession>Q03M63</accession>
<keyword id="KW-0378">Hydrolase</keyword>
<keyword id="KW-0460">Magnesium</keyword>
<keyword id="KW-0479">Metal-binding</keyword>
<protein>
    <recommendedName>
        <fullName evidence="1">Nucleoside triphosphate/diphosphate phosphatase</fullName>
        <ecNumber evidence="1">3.6.1.15</ecNumber>
        <ecNumber evidence="1">3.6.1.6</ecNumber>
    </recommendedName>
</protein>
<organism>
    <name type="scientific">Streptococcus thermophilus (strain ATCC BAA-491 / LMD-9)</name>
    <dbReference type="NCBI Taxonomy" id="322159"/>
    <lineage>
        <taxon>Bacteria</taxon>
        <taxon>Bacillati</taxon>
        <taxon>Bacillota</taxon>
        <taxon>Bacilli</taxon>
        <taxon>Lactobacillales</taxon>
        <taxon>Streptococcaceae</taxon>
        <taxon>Streptococcus</taxon>
    </lineage>
</organism>